<feature type="signal peptide" evidence="3">
    <location>
        <begin position="1"/>
        <end position="23"/>
    </location>
</feature>
<feature type="peptide" id="PRO_0000447111" description="U1-poneritoxin-Dq5a" evidence="7">
    <location>
        <begin position="24"/>
        <end position="53"/>
    </location>
</feature>
<feature type="disulfide bond" evidence="1 2">
    <location>
        <begin position="25"/>
        <end position="42"/>
    </location>
</feature>
<feature type="disulfide bond" evidence="1 2">
    <location>
        <begin position="32"/>
        <end position="47"/>
    </location>
</feature>
<feature type="disulfide bond" evidence="1 2">
    <location>
        <begin position="41"/>
        <end position="52"/>
    </location>
</feature>
<keyword id="KW-1015">Disulfide bond</keyword>
<keyword id="KW-0960">Knottin</keyword>
<keyword id="KW-0528">Neurotoxin</keyword>
<keyword id="KW-1185">Reference proteome</keyword>
<keyword id="KW-0964">Secreted</keyword>
<keyword id="KW-0732">Signal</keyword>
<keyword id="KW-0800">Toxin</keyword>
<dbReference type="SMR" id="P0DSL6"/>
<dbReference type="Proteomes" id="UP000515204">
    <property type="component" value="Unplaced"/>
</dbReference>
<dbReference type="GO" id="GO:0005576">
    <property type="term" value="C:extracellular region"/>
    <property type="evidence" value="ECO:0007669"/>
    <property type="project" value="UniProtKB-SubCell"/>
</dbReference>
<dbReference type="GO" id="GO:0090729">
    <property type="term" value="F:toxin activity"/>
    <property type="evidence" value="ECO:0007669"/>
    <property type="project" value="UniProtKB-KW"/>
</dbReference>
<protein>
    <recommendedName>
        <fullName evidence="5">U1-poneritoxin-Dq5a</fullName>
        <shortName evidence="5">U1-PONTX-Dq5a</shortName>
    </recommendedName>
    <alternativeName>
        <fullName evidence="4">Dinoponera ICK-like toxin</fullName>
    </alternativeName>
    <alternativeName>
        <fullName evidence="6">Poneratoxin</fullName>
    </alternativeName>
</protein>
<organism>
    <name type="scientific">Dinoponera quadriceps</name>
    <name type="common">South American ant</name>
    <dbReference type="NCBI Taxonomy" id="609295"/>
    <lineage>
        <taxon>Eukaryota</taxon>
        <taxon>Metazoa</taxon>
        <taxon>Ecdysozoa</taxon>
        <taxon>Arthropoda</taxon>
        <taxon>Hexapoda</taxon>
        <taxon>Insecta</taxon>
        <taxon>Pterygota</taxon>
        <taxon>Neoptera</taxon>
        <taxon>Endopterygota</taxon>
        <taxon>Hymenoptera</taxon>
        <taxon>Apocrita</taxon>
        <taxon>Aculeata</taxon>
        <taxon>Formicoidea</taxon>
        <taxon>Formicidae</taxon>
        <taxon>Ponerinae</taxon>
        <taxon>Ponerini</taxon>
        <taxon>Dinoponera</taxon>
    </lineage>
</organism>
<sequence length="53" mass="5835">MNIRLMFTLIALLVLTVSFSGANSCFKRNRQCKGSFLKSACCEGLKCVNGRCT</sequence>
<proteinExistence type="inferred from homology"/>
<comment type="function">
    <text evidence="2">May have neurotoxic activity.</text>
</comment>
<comment type="subcellular location">
    <subcellularLocation>
        <location evidence="7">Secreted</location>
    </subcellularLocation>
</comment>
<comment type="tissue specificity">
    <text evidence="7">Expressed by the venom gland.</text>
</comment>
<comment type="domain">
    <text evidence="1">The presence of a 'disulfide through disulfide knot' structurally defines this protein as a knottin.</text>
</comment>
<comment type="online information" name="National Center for Biotechnology Information (NCBI)">
    <link uri="https://www.ncbi.nlm.nih.gov/nuccore/GANS01000017"/>
</comment>
<evidence type="ECO:0000250" key="1">
    <source>
        <dbReference type="UniProtKB" id="P0C201"/>
    </source>
</evidence>
<evidence type="ECO:0000250" key="2">
    <source>
        <dbReference type="UniProtKB" id="Q26443"/>
    </source>
</evidence>
<evidence type="ECO:0000255" key="3"/>
<evidence type="ECO:0000303" key="4">
    <source>
    </source>
</evidence>
<evidence type="ECO:0000303" key="5">
    <source>
    </source>
</evidence>
<evidence type="ECO:0000305" key="6"/>
<evidence type="ECO:0000305" key="7">
    <source>
    </source>
</evidence>
<accession>P0DSL6</accession>
<name>TX5A_DINQU</name>
<reference key="1">
    <citation type="journal article" date="2014" name="PLoS ONE">
        <title>Transcriptome analysis in venom gland of the predatory giant ant Dinoponera quadriceps: insights into the polypeptide toxin arsenal of hymenopterans.</title>
        <authorList>
            <person name="Torres A.F."/>
            <person name="Huang C."/>
            <person name="Chong C.M."/>
            <person name="Leung S.W."/>
            <person name="Prieto-da-Silva A.R."/>
            <person name="Havt A."/>
            <person name="Quinet Y.P."/>
            <person name="Martins A.M."/>
            <person name="Lee S.M."/>
            <person name="Radis-Baptista G."/>
        </authorList>
    </citation>
    <scope>NUCLEOTIDE SEQUENCE [MRNA]</scope>
    <source>
        <tissue>Venom gland</tissue>
    </source>
</reference>
<reference key="2">
    <citation type="journal article" date="2016" name="Toxins">
        <title>The biochemical toxin arsenal from ant venoms.</title>
        <authorList>
            <person name="Touchard A."/>
            <person name="Aili S.R."/>
            <person name="Fox E.G."/>
            <person name="Escoubas P."/>
            <person name="Orivel J."/>
            <person name="Nicholson G.M."/>
            <person name="Dejean A."/>
        </authorList>
    </citation>
    <scope>REVIEW</scope>
    <scope>NOMENCLATURE</scope>
</reference>